<keyword id="KW-0997">Cell inner membrane</keyword>
<keyword id="KW-1003">Cell membrane</keyword>
<keyword id="KW-0472">Membrane</keyword>
<keyword id="KW-0762">Sugar transport</keyword>
<keyword id="KW-0769">Symport</keyword>
<keyword id="KW-0812">Transmembrane</keyword>
<keyword id="KW-1133">Transmembrane helix</keyword>
<keyword id="KW-0813">Transport</keyword>
<dbReference type="EMBL" id="CU928160">
    <property type="protein sequence ID" value="CAR00886.1"/>
    <property type="molecule type" value="Genomic_DNA"/>
</dbReference>
<dbReference type="RefSeq" id="WP_001166063.1">
    <property type="nucleotide sequence ID" value="NC_011741.1"/>
</dbReference>
<dbReference type="GeneID" id="75204583"/>
<dbReference type="KEGG" id="ecr:ECIAI1_4115"/>
<dbReference type="HOGENOM" id="CLU_057476_0_1_6"/>
<dbReference type="GO" id="GO:0005886">
    <property type="term" value="C:plasma membrane"/>
    <property type="evidence" value="ECO:0007669"/>
    <property type="project" value="UniProtKB-SubCell"/>
</dbReference>
<dbReference type="GO" id="GO:0015649">
    <property type="term" value="F:2-keto-3-deoxygluconate:proton symporter activity"/>
    <property type="evidence" value="ECO:0007669"/>
    <property type="project" value="UniProtKB-UniRule"/>
</dbReference>
<dbReference type="HAMAP" id="MF_00070">
    <property type="entry name" value="KdgT"/>
    <property type="match status" value="1"/>
</dbReference>
<dbReference type="InterPro" id="IPR004684">
    <property type="entry name" value="2keto-3dGluconate_permease"/>
</dbReference>
<dbReference type="InterPro" id="IPR018395">
    <property type="entry name" value="2keto-3dGluconate_permease_sub"/>
</dbReference>
<dbReference type="NCBIfam" id="TIGR00793">
    <property type="entry name" value="kdgT"/>
    <property type="match status" value="1"/>
</dbReference>
<dbReference type="Pfam" id="PF03812">
    <property type="entry name" value="KdgT"/>
    <property type="match status" value="1"/>
</dbReference>
<protein>
    <recommendedName>
        <fullName evidence="1">2-keto-3-deoxygluconate permease</fullName>
        <shortName evidence="1">KDG permease</shortName>
    </recommendedName>
</protein>
<organism>
    <name type="scientific">Escherichia coli O8 (strain IAI1)</name>
    <dbReference type="NCBI Taxonomy" id="585034"/>
    <lineage>
        <taxon>Bacteria</taxon>
        <taxon>Pseudomonadati</taxon>
        <taxon>Pseudomonadota</taxon>
        <taxon>Gammaproteobacteria</taxon>
        <taxon>Enterobacterales</taxon>
        <taxon>Enterobacteriaceae</taxon>
        <taxon>Escherichia</taxon>
    </lineage>
</organism>
<name>KDGT_ECO8A</name>
<evidence type="ECO:0000255" key="1">
    <source>
        <dbReference type="HAMAP-Rule" id="MF_00070"/>
    </source>
</evidence>
<reference key="1">
    <citation type="journal article" date="2009" name="PLoS Genet.">
        <title>Organised genome dynamics in the Escherichia coli species results in highly diverse adaptive paths.</title>
        <authorList>
            <person name="Touchon M."/>
            <person name="Hoede C."/>
            <person name="Tenaillon O."/>
            <person name="Barbe V."/>
            <person name="Baeriswyl S."/>
            <person name="Bidet P."/>
            <person name="Bingen E."/>
            <person name="Bonacorsi S."/>
            <person name="Bouchier C."/>
            <person name="Bouvet O."/>
            <person name="Calteau A."/>
            <person name="Chiapello H."/>
            <person name="Clermont O."/>
            <person name="Cruveiller S."/>
            <person name="Danchin A."/>
            <person name="Diard M."/>
            <person name="Dossat C."/>
            <person name="Karoui M.E."/>
            <person name="Frapy E."/>
            <person name="Garry L."/>
            <person name="Ghigo J.M."/>
            <person name="Gilles A.M."/>
            <person name="Johnson J."/>
            <person name="Le Bouguenec C."/>
            <person name="Lescat M."/>
            <person name="Mangenot S."/>
            <person name="Martinez-Jehanne V."/>
            <person name="Matic I."/>
            <person name="Nassif X."/>
            <person name="Oztas S."/>
            <person name="Petit M.A."/>
            <person name="Pichon C."/>
            <person name="Rouy Z."/>
            <person name="Ruf C.S."/>
            <person name="Schneider D."/>
            <person name="Tourret J."/>
            <person name="Vacherie B."/>
            <person name="Vallenet D."/>
            <person name="Medigue C."/>
            <person name="Rocha E.P.C."/>
            <person name="Denamur E."/>
        </authorList>
    </citation>
    <scope>NUCLEOTIDE SEQUENCE [LARGE SCALE GENOMIC DNA]</scope>
    <source>
        <strain>IAI1</strain>
    </source>
</reference>
<accession>B7M6W1</accession>
<gene>
    <name evidence="1" type="primary">kdgT</name>
    <name type="ordered locus">ECIAI1_4115</name>
</gene>
<sequence length="327" mass="33669">MQIKRSIEKIPGGMMLVPLFLGALCHTFSPGAGKYFGSFTNGMITGTVPILAVWFFCMGASIKLSATGTVLRKSGTLVVTKIAVAWVVAAIASRIIPEHGVEVGFFAGLSTLALVAAMDMTNGGLYASIMQQYGTKEEAGAFVLMSLESGPLMTMIILGTAGIASFEPHVFVGAVLPFLVGFALGNLDPELREFFSKAVQTLIPFFAFALGNTIDLTVIAQTGLLGILLGVAVIIVTGIPLIIADKLIGGGDGTAGIAASSSAGAAVATPVLIAEMVPAFKPMAPAATSLVATAVIVTSILVPILTSIWSRKVKARAAKIEILGTVK</sequence>
<comment type="function">
    <text evidence="1">Catalyzes the proton-dependent uptake of 2-keto-3-deoxygluconate (KDG) into the cell.</text>
</comment>
<comment type="catalytic activity">
    <reaction evidence="1">
        <text>2-dehydro-3-deoxy-D-gluconate(in) + H(+)(in) = 2-dehydro-3-deoxy-D-gluconate(out) + H(+)(out)</text>
        <dbReference type="Rhea" id="RHEA:29943"/>
        <dbReference type="ChEBI" id="CHEBI:15378"/>
        <dbReference type="ChEBI" id="CHEBI:57990"/>
    </reaction>
    <physiologicalReaction direction="right-to-left" evidence="1">
        <dbReference type="Rhea" id="RHEA:29945"/>
    </physiologicalReaction>
</comment>
<comment type="subcellular location">
    <subcellularLocation>
        <location evidence="1">Cell inner membrane</location>
        <topology evidence="1">Multi-pass membrane protein</topology>
    </subcellularLocation>
</comment>
<comment type="similarity">
    <text evidence="1">Belongs to the KdgT transporter family.</text>
</comment>
<proteinExistence type="inferred from homology"/>
<feature type="chain" id="PRO_1000117009" description="2-keto-3-deoxygluconate permease">
    <location>
        <begin position="1"/>
        <end position="327"/>
    </location>
</feature>
<feature type="transmembrane region" description="Helical" evidence="1">
    <location>
        <begin position="10"/>
        <end position="30"/>
    </location>
</feature>
<feature type="transmembrane region" description="Helical" evidence="1">
    <location>
        <begin position="42"/>
        <end position="62"/>
    </location>
</feature>
<feature type="transmembrane region" description="Helical" evidence="1">
    <location>
        <begin position="73"/>
        <end position="93"/>
    </location>
</feature>
<feature type="transmembrane region" description="Helical" evidence="1">
    <location>
        <begin position="95"/>
        <end position="115"/>
    </location>
</feature>
<feature type="transmembrane region" description="Helical" evidence="1">
    <location>
        <begin position="139"/>
        <end position="159"/>
    </location>
</feature>
<feature type="transmembrane region" description="Helical" evidence="1">
    <location>
        <begin position="163"/>
        <end position="183"/>
    </location>
</feature>
<feature type="transmembrane region" description="Helical" evidence="1">
    <location>
        <begin position="199"/>
        <end position="219"/>
    </location>
</feature>
<feature type="transmembrane region" description="Helical" evidence="1">
    <location>
        <begin position="224"/>
        <end position="244"/>
    </location>
</feature>
<feature type="transmembrane region" description="Helical" evidence="1">
    <location>
        <begin position="254"/>
        <end position="274"/>
    </location>
</feature>
<feature type="transmembrane region" description="Helical" evidence="1">
    <location>
        <begin position="289"/>
        <end position="309"/>
    </location>
</feature>